<proteinExistence type="evidence at transcript level"/>
<dbReference type="EMBL" id="AB168345">
    <property type="protein sequence ID" value="BAE00469.1"/>
    <property type="status" value="ALT_FRAME"/>
    <property type="molecule type" value="mRNA"/>
</dbReference>
<dbReference type="EMBL" id="AB169914">
    <property type="protein sequence ID" value="BAE01995.1"/>
    <property type="molecule type" value="mRNA"/>
</dbReference>
<dbReference type="RefSeq" id="XP_005592646.1">
    <property type="nucleotide sequence ID" value="XM_005592589.4"/>
</dbReference>
<dbReference type="BMRB" id="Q4R4I0"/>
<dbReference type="SMR" id="Q4R4I0"/>
<dbReference type="STRING" id="9541.ENSMFAP00000008076"/>
<dbReference type="GeneID" id="102123393"/>
<dbReference type="KEGG" id="mcf:102123393"/>
<dbReference type="CTD" id="54386"/>
<dbReference type="VEuPathDB" id="HostDB:ENSMFAG00000034117"/>
<dbReference type="eggNOG" id="ENOG502RPXS">
    <property type="taxonomic scope" value="Eukaryota"/>
</dbReference>
<dbReference type="OMA" id="SDGYPIW"/>
<dbReference type="OrthoDB" id="13052at314294"/>
<dbReference type="Proteomes" id="UP000233100">
    <property type="component" value="Chromosome 20"/>
</dbReference>
<dbReference type="GO" id="GO:0000781">
    <property type="term" value="C:chromosome, telomeric region"/>
    <property type="evidence" value="ECO:0000250"/>
    <property type="project" value="UniProtKB"/>
</dbReference>
<dbReference type="GO" id="GO:0005737">
    <property type="term" value="C:cytoplasm"/>
    <property type="evidence" value="ECO:0000250"/>
    <property type="project" value="UniProtKB"/>
</dbReference>
<dbReference type="GO" id="GO:0005634">
    <property type="term" value="C:nucleus"/>
    <property type="evidence" value="ECO:0000250"/>
    <property type="project" value="UniProtKB"/>
</dbReference>
<dbReference type="GO" id="GO:0070187">
    <property type="term" value="C:shelterin complex"/>
    <property type="evidence" value="ECO:0007669"/>
    <property type="project" value="TreeGrafter"/>
</dbReference>
<dbReference type="GO" id="GO:0042162">
    <property type="term" value="F:telomeric DNA binding"/>
    <property type="evidence" value="ECO:0007669"/>
    <property type="project" value="TreeGrafter"/>
</dbReference>
<dbReference type="GO" id="GO:0048239">
    <property type="term" value="P:negative regulation of DNA recombination at telomere"/>
    <property type="evidence" value="ECO:0000250"/>
    <property type="project" value="UniProtKB"/>
</dbReference>
<dbReference type="GO" id="GO:0043123">
    <property type="term" value="P:positive regulation of canonical NF-kappaB signal transduction"/>
    <property type="evidence" value="ECO:0000250"/>
    <property type="project" value="UniProtKB"/>
</dbReference>
<dbReference type="GO" id="GO:0051092">
    <property type="term" value="P:positive regulation of NF-kappaB transcription factor activity"/>
    <property type="evidence" value="ECO:0000250"/>
    <property type="project" value="UniProtKB"/>
</dbReference>
<dbReference type="GO" id="GO:0006355">
    <property type="term" value="P:regulation of DNA-templated transcription"/>
    <property type="evidence" value="ECO:0000250"/>
    <property type="project" value="UniProtKB"/>
</dbReference>
<dbReference type="GO" id="GO:0010569">
    <property type="term" value="P:regulation of double-strand break repair via homologous recombination"/>
    <property type="evidence" value="ECO:0000250"/>
    <property type="project" value="UniProtKB"/>
</dbReference>
<dbReference type="GO" id="GO:0010833">
    <property type="term" value="P:telomere maintenance via telomere lengthening"/>
    <property type="evidence" value="ECO:0000250"/>
    <property type="project" value="UniProtKB"/>
</dbReference>
<dbReference type="CDD" id="cd11655">
    <property type="entry name" value="rap1_myb-like"/>
    <property type="match status" value="1"/>
</dbReference>
<dbReference type="CDD" id="cd11653">
    <property type="entry name" value="rap1_RCT"/>
    <property type="match status" value="1"/>
</dbReference>
<dbReference type="FunFam" id="1.10.10.2170:FF:000001">
    <property type="entry name" value="Telomeric repeat-binding factor 2-interacting protein 1"/>
    <property type="match status" value="1"/>
</dbReference>
<dbReference type="FunFam" id="1.10.10.60:FF:000246">
    <property type="entry name" value="Telomeric repeat-binding factor 2-interacting protein 1"/>
    <property type="match status" value="1"/>
</dbReference>
<dbReference type="Gene3D" id="1.10.10.2170">
    <property type="match status" value="1"/>
</dbReference>
<dbReference type="Gene3D" id="3.40.50.10190">
    <property type="entry name" value="BRCT domain"/>
    <property type="match status" value="1"/>
</dbReference>
<dbReference type="Gene3D" id="1.10.10.60">
    <property type="entry name" value="Homeodomain-like"/>
    <property type="match status" value="1"/>
</dbReference>
<dbReference type="InterPro" id="IPR001357">
    <property type="entry name" value="BRCT_dom"/>
</dbReference>
<dbReference type="InterPro" id="IPR036420">
    <property type="entry name" value="BRCT_dom_sf"/>
</dbReference>
<dbReference type="InterPro" id="IPR009057">
    <property type="entry name" value="Homeodomain-like_sf"/>
</dbReference>
<dbReference type="InterPro" id="IPR021661">
    <property type="entry name" value="Rap1_C"/>
</dbReference>
<dbReference type="InterPro" id="IPR038104">
    <property type="entry name" value="Rap1_C_sf"/>
</dbReference>
<dbReference type="InterPro" id="IPR039595">
    <property type="entry name" value="TE2IP/Rap1"/>
</dbReference>
<dbReference type="InterPro" id="IPR015010">
    <property type="entry name" value="TERF2IP_Myb"/>
</dbReference>
<dbReference type="PANTHER" id="PTHR16466">
    <property type="entry name" value="TELOMERE REPEAT-BINDING FACTOR 2-INTERACTING PROTEIN 1"/>
    <property type="match status" value="1"/>
</dbReference>
<dbReference type="PANTHER" id="PTHR16466:SF6">
    <property type="entry name" value="TELOMERIC REPEAT-BINDING FACTOR 2-INTERACTING PROTEIN 1"/>
    <property type="match status" value="1"/>
</dbReference>
<dbReference type="Pfam" id="PF16589">
    <property type="entry name" value="BRCT_2"/>
    <property type="match status" value="1"/>
</dbReference>
<dbReference type="Pfam" id="PF08914">
    <property type="entry name" value="Myb_Rap1"/>
    <property type="match status" value="1"/>
</dbReference>
<dbReference type="Pfam" id="PF11626">
    <property type="entry name" value="Rap1_C"/>
    <property type="match status" value="1"/>
</dbReference>
<dbReference type="SUPFAM" id="SSF46689">
    <property type="entry name" value="Homeodomain-like"/>
    <property type="match status" value="1"/>
</dbReference>
<reference key="1">
    <citation type="submission" date="2005-06" db="EMBL/GenBank/DDBJ databases">
        <title>DNA sequences of macaque genes expressed in brain or testis and its evolutionary implications.</title>
        <authorList>
            <consortium name="International consortium for macaque cDNA sequencing and analysis"/>
        </authorList>
    </citation>
    <scope>NUCLEOTIDE SEQUENCE [LARGE SCALE MRNA]</scope>
    <source>
        <tissue>Temporal cortex</tissue>
        <tissue>Testis</tissue>
    </source>
</reference>
<evidence type="ECO:0000250" key="1"/>
<evidence type="ECO:0000250" key="2">
    <source>
        <dbReference type="UniProtKB" id="Q91VL8"/>
    </source>
</evidence>
<evidence type="ECO:0000250" key="3">
    <source>
        <dbReference type="UniProtKB" id="Q9NYB0"/>
    </source>
</evidence>
<evidence type="ECO:0000255" key="4"/>
<evidence type="ECO:0000256" key="5">
    <source>
        <dbReference type="SAM" id="MobiDB-lite"/>
    </source>
</evidence>
<evidence type="ECO:0000305" key="6"/>
<organism>
    <name type="scientific">Macaca fascicularis</name>
    <name type="common">Crab-eating macaque</name>
    <name type="synonym">Cynomolgus monkey</name>
    <dbReference type="NCBI Taxonomy" id="9541"/>
    <lineage>
        <taxon>Eukaryota</taxon>
        <taxon>Metazoa</taxon>
        <taxon>Chordata</taxon>
        <taxon>Craniata</taxon>
        <taxon>Vertebrata</taxon>
        <taxon>Euteleostomi</taxon>
        <taxon>Mammalia</taxon>
        <taxon>Eutheria</taxon>
        <taxon>Euarchontoglires</taxon>
        <taxon>Primates</taxon>
        <taxon>Haplorrhini</taxon>
        <taxon>Catarrhini</taxon>
        <taxon>Cercopithecidae</taxon>
        <taxon>Cercopithecinae</taxon>
        <taxon>Macaca</taxon>
    </lineage>
</organism>
<keyword id="KW-0007">Acetylation</keyword>
<keyword id="KW-0010">Activator</keyword>
<keyword id="KW-0158">Chromosome</keyword>
<keyword id="KW-0963">Cytoplasm</keyword>
<keyword id="KW-1017">Isopeptide bond</keyword>
<keyword id="KW-0539">Nucleus</keyword>
<keyword id="KW-0597">Phosphoprotein</keyword>
<keyword id="KW-1185">Reference proteome</keyword>
<keyword id="KW-0779">Telomere</keyword>
<keyword id="KW-0804">Transcription</keyword>
<keyword id="KW-0805">Transcription regulation</keyword>
<keyword id="KW-0832">Ubl conjugation</keyword>
<name>TE2IP_MACFA</name>
<gene>
    <name type="primary">TERF2IP</name>
    <name type="synonym">RAP1</name>
    <name type="ORF">QtrA-13975</name>
    <name type="ORF">QtsA-11378</name>
</gene>
<accession>Q4R4I0</accession>
<accession>Q4R8V2</accession>
<comment type="function">
    <text evidence="1">Acts both as a regulator of telomere function and as a transcription regulator. Involved in the regulation of telomere length and protection as a component of the shelterin complex (telosome). In contrast to other components of the shelterin complex, it is dispensible for telomere capping and does not participate in the protection of telomeres against non-homologous end-joining (NHEJ)-mediated repair. Instead, it is required to negatively regulate telomere recombination and is essential for repressing homology-directed repair (HDR), which can affect telomere length. Does not bind DNA directly: recruited to telomeric double-stranded 5'-TTAGGG-3' repeats via its interaction with TERF2. Independently of its function in telomeres, also acts as a transcription regulator: recruited to extratelomeric 5'-TTAGGG-3' sites via its association with TERF2 or other factors, and regulates gene expression. When cytoplasmic, associates with the I-kappa-B-kinase (IKK) complex and acts as a regulator of the NF-kappa-B signaling by promoting IKK-mediated phosphorylation of RELA/p65, leading to activate expression of NF-kappa-B target genes (By similarity).</text>
</comment>
<comment type="subunit">
    <text evidence="1">Associates with the I-kappa-B-kinase (IKK) core complex, composed of CHUK, IKBKB and IKBKG (By similarity). Homodimer. Component of the shelterin complex (telosome) composed of TERF1, TERF2, TINF2, TERF2IP ACD and POT1. Interacts with TERF2 (but not TERF1) with its C-terminus. Interacts with SLX4/BTBD12. Interacts with TERF2; the interaction is direct (By similarity).</text>
</comment>
<comment type="subcellular location">
    <subcellularLocation>
        <location evidence="2">Nucleus</location>
    </subcellularLocation>
    <subcellularLocation>
        <location evidence="2">Cytoplasm</location>
    </subcellularLocation>
    <subcellularLocation>
        <location evidence="2">Chromosome</location>
    </subcellularLocation>
    <subcellularLocation>
        <location evidence="2">Chromosome</location>
        <location evidence="2">Telomere</location>
    </subcellularLocation>
    <text evidence="2">Associates with chromosomes, both at telomeres and in extratelomeric sites. Also exists as a cytoplasmic form, where it associates with the IKK complex.</text>
</comment>
<comment type="similarity">
    <text evidence="6">Belongs to the RAP1 family.</text>
</comment>
<comment type="sequence caution" evidence="6">
    <conflict type="frameshift">
        <sequence resource="EMBL-CDS" id="BAE00469"/>
    </conflict>
</comment>
<feature type="initiator methionine" description="Removed" evidence="3">
    <location>
        <position position="1"/>
    </location>
</feature>
<feature type="chain" id="PRO_0000398640" description="Telomeric repeat-binding factor 2-interacting protein 1">
    <location>
        <begin position="2"/>
        <end position="400"/>
    </location>
</feature>
<feature type="domain" description="BRCT">
    <location>
        <begin position="78"/>
        <end position="101"/>
    </location>
</feature>
<feature type="domain" description="Myb-like">
    <location>
        <begin position="128"/>
        <end position="188"/>
    </location>
</feature>
<feature type="region of interest" description="Disordered" evidence="5">
    <location>
        <begin position="105"/>
        <end position="126"/>
    </location>
</feature>
<feature type="region of interest" description="Disordered" evidence="5">
    <location>
        <begin position="196"/>
        <end position="244"/>
    </location>
</feature>
<feature type="region of interest" description="Disordered" evidence="5">
    <location>
        <begin position="264"/>
        <end position="311"/>
    </location>
</feature>
<feature type="short sequence motif" description="Nuclear localization signal" evidence="4">
    <location>
        <begin position="384"/>
        <end position="400"/>
    </location>
</feature>
<feature type="compositionally biased region" description="Low complexity" evidence="5">
    <location>
        <begin position="112"/>
        <end position="125"/>
    </location>
</feature>
<feature type="compositionally biased region" description="Acidic residues" evidence="5">
    <location>
        <begin position="280"/>
        <end position="305"/>
    </location>
</feature>
<feature type="modified residue" description="N-acetylalanine" evidence="3">
    <location>
        <position position="2"/>
    </location>
</feature>
<feature type="modified residue" description="Phosphoserine" evidence="3">
    <location>
        <position position="36"/>
    </location>
</feature>
<feature type="modified residue" description="Phosphoserine" evidence="3">
    <location>
        <position position="43"/>
    </location>
</feature>
<feature type="modified residue" description="Phosphoserine" evidence="3">
    <location>
        <position position="154"/>
    </location>
</feature>
<feature type="modified residue" description="Phosphoserine" evidence="3">
    <location>
        <position position="156"/>
    </location>
</feature>
<feature type="modified residue" description="Phosphoserine" evidence="3">
    <location>
        <position position="203"/>
    </location>
</feature>
<feature type="modified residue" description="Phosphoserine" evidence="3">
    <location>
        <position position="206"/>
    </location>
</feature>
<feature type="cross-link" description="Glycyl lysine isopeptide (Lys-Gly) (interchain with G-Cter in SUMO2)" evidence="3">
    <location>
        <position position="114"/>
    </location>
</feature>
<feature type="cross-link" description="Glycyl lysine isopeptide (Lys-Gly) (interchain with G-Cter in SUMO2)" evidence="3">
    <location>
        <position position="194"/>
    </location>
</feature>
<feature type="cross-link" description="Glycyl lysine isopeptide (Lys-Gly) (interchain with G-Cter in SUMO2)" evidence="3">
    <location>
        <position position="208"/>
    </location>
</feature>
<feature type="cross-link" description="Glycyl lysine isopeptide (Lys-Gly) (interchain with G-Cter in SUMO2)" evidence="3">
    <location>
        <position position="212"/>
    </location>
</feature>
<feature type="cross-link" description="Glycyl lysine isopeptide (Lys-Gly) (interchain with G-Cter in SUMO2)" evidence="3">
    <location>
        <position position="240"/>
    </location>
</feature>
<feature type="cross-link" description="Glycyl lysine isopeptide (Lys-Gly) (interchain with G-Cter in SUMO2)" evidence="3">
    <location>
        <position position="373"/>
    </location>
</feature>
<protein>
    <recommendedName>
        <fullName>Telomeric repeat-binding factor 2-interacting protein 1</fullName>
        <shortName>TERF2-interacting telomeric protein 1</shortName>
        <shortName>TRF2-interacting telomeric protein 1</shortName>
    </recommendedName>
    <alternativeName>
        <fullName>Repressor/activator protein 1 homolog</fullName>
        <shortName>RAP1 homolog</shortName>
    </alternativeName>
</protein>
<sequence length="400" mass="44369">MAEAMDLGKDPNGPTHSSTLFVREDGSSMSFYVRPSPAKRRLSTLILHGGGTVCRVQEPGAVLLAQPGEALAEASGDFISTQYILDCVERNERLELEAYRLGSASAADTGSEAKPGALAEGAAEPEPQRLAGRIAFTDADDVAILTYVKENARSPSSVTGNALWKAMEKSSLTQHSWQSLKDRYLKHLRGQEHKYLLGDAPVSPSSQKLKRKAEEDPEAADSGEPQNKRTPDLPEEEYVKEEIQENEEAVKKMLVEATREFEEVVVDESPPDFEIHITMCDDDPPTPEEDSETQPDEEEEEEEEEKVSQPEVGAAIKIIRQLMEKFNLDLSTVTQAFLKNSGELEATSAFLASGQRADGYPIWSRQDDIDLQKDDEDTREALVKKFGAQNVARRIEFRKK</sequence>